<reference key="1">
    <citation type="journal article" date="2008" name="DNA Res.">
        <title>Complete genome sequence and comparative analysis of the wild-type commensal Escherichia coli strain SE11 isolated from a healthy adult.</title>
        <authorList>
            <person name="Oshima K."/>
            <person name="Toh H."/>
            <person name="Ogura Y."/>
            <person name="Sasamoto H."/>
            <person name="Morita H."/>
            <person name="Park S.-H."/>
            <person name="Ooka T."/>
            <person name="Iyoda S."/>
            <person name="Taylor T.D."/>
            <person name="Hayashi T."/>
            <person name="Itoh K."/>
            <person name="Hattori M."/>
        </authorList>
    </citation>
    <scope>NUCLEOTIDE SEQUENCE [LARGE SCALE GENOMIC DNA]</scope>
    <source>
        <strain>SE11</strain>
    </source>
</reference>
<keyword id="KW-0067">ATP-binding</keyword>
<keyword id="KW-0997">Cell inner membrane</keyword>
<keyword id="KW-1003">Cell membrane</keyword>
<keyword id="KW-0963">Cytoplasm</keyword>
<keyword id="KW-0472">Membrane</keyword>
<keyword id="KW-0479">Metal-binding</keyword>
<keyword id="KW-0547">Nucleotide-binding</keyword>
<keyword id="KW-0653">Protein transport</keyword>
<keyword id="KW-1278">Translocase</keyword>
<keyword id="KW-0811">Translocation</keyword>
<keyword id="KW-0813">Transport</keyword>
<keyword id="KW-0862">Zinc</keyword>
<organism>
    <name type="scientific">Escherichia coli (strain SE11)</name>
    <dbReference type="NCBI Taxonomy" id="409438"/>
    <lineage>
        <taxon>Bacteria</taxon>
        <taxon>Pseudomonadati</taxon>
        <taxon>Pseudomonadota</taxon>
        <taxon>Gammaproteobacteria</taxon>
        <taxon>Enterobacterales</taxon>
        <taxon>Enterobacteriaceae</taxon>
        <taxon>Escherichia</taxon>
    </lineage>
</organism>
<gene>
    <name evidence="1" type="primary">secA</name>
    <name type="ordered locus">ECSE_0100</name>
</gene>
<protein>
    <recommendedName>
        <fullName evidence="1">Protein translocase subunit SecA</fullName>
        <ecNumber evidence="1">7.4.2.8</ecNumber>
    </recommendedName>
</protein>
<dbReference type="EC" id="7.4.2.8" evidence="1"/>
<dbReference type="EMBL" id="AP009240">
    <property type="protein sequence ID" value="BAG75624.1"/>
    <property type="molecule type" value="Genomic_DNA"/>
</dbReference>
<dbReference type="RefSeq" id="WP_000905789.1">
    <property type="nucleotide sequence ID" value="NC_011415.1"/>
</dbReference>
<dbReference type="SMR" id="B6HZ76"/>
<dbReference type="GeneID" id="93777336"/>
<dbReference type="KEGG" id="ecy:ECSE_0100"/>
<dbReference type="HOGENOM" id="CLU_005314_3_0_6"/>
<dbReference type="Proteomes" id="UP000008199">
    <property type="component" value="Chromosome"/>
</dbReference>
<dbReference type="GO" id="GO:0031522">
    <property type="term" value="C:cell envelope Sec protein transport complex"/>
    <property type="evidence" value="ECO:0007669"/>
    <property type="project" value="TreeGrafter"/>
</dbReference>
<dbReference type="GO" id="GO:0005829">
    <property type="term" value="C:cytosol"/>
    <property type="evidence" value="ECO:0007669"/>
    <property type="project" value="TreeGrafter"/>
</dbReference>
<dbReference type="GO" id="GO:0005886">
    <property type="term" value="C:plasma membrane"/>
    <property type="evidence" value="ECO:0007669"/>
    <property type="project" value="UniProtKB-SubCell"/>
</dbReference>
<dbReference type="GO" id="GO:0005524">
    <property type="term" value="F:ATP binding"/>
    <property type="evidence" value="ECO:0007669"/>
    <property type="project" value="UniProtKB-UniRule"/>
</dbReference>
<dbReference type="GO" id="GO:0046872">
    <property type="term" value="F:metal ion binding"/>
    <property type="evidence" value="ECO:0007669"/>
    <property type="project" value="UniProtKB-KW"/>
</dbReference>
<dbReference type="GO" id="GO:0008564">
    <property type="term" value="F:protein-exporting ATPase activity"/>
    <property type="evidence" value="ECO:0007669"/>
    <property type="project" value="UniProtKB-EC"/>
</dbReference>
<dbReference type="GO" id="GO:0065002">
    <property type="term" value="P:intracellular protein transmembrane transport"/>
    <property type="evidence" value="ECO:0007669"/>
    <property type="project" value="UniProtKB-UniRule"/>
</dbReference>
<dbReference type="GO" id="GO:0017038">
    <property type="term" value="P:protein import"/>
    <property type="evidence" value="ECO:0007669"/>
    <property type="project" value="InterPro"/>
</dbReference>
<dbReference type="GO" id="GO:0006605">
    <property type="term" value="P:protein targeting"/>
    <property type="evidence" value="ECO:0007669"/>
    <property type="project" value="UniProtKB-UniRule"/>
</dbReference>
<dbReference type="GO" id="GO:0043952">
    <property type="term" value="P:protein transport by the Sec complex"/>
    <property type="evidence" value="ECO:0007669"/>
    <property type="project" value="TreeGrafter"/>
</dbReference>
<dbReference type="CDD" id="cd17928">
    <property type="entry name" value="DEXDc_SecA"/>
    <property type="match status" value="1"/>
</dbReference>
<dbReference type="CDD" id="cd18803">
    <property type="entry name" value="SF2_C_secA"/>
    <property type="match status" value="1"/>
</dbReference>
<dbReference type="FunFam" id="1.10.3060.10:FF:000001">
    <property type="entry name" value="Preprotein translocase subunit SecA"/>
    <property type="match status" value="1"/>
</dbReference>
<dbReference type="FunFam" id="3.40.50.300:FF:000081">
    <property type="entry name" value="Preprotein translocase subunit SecA"/>
    <property type="match status" value="1"/>
</dbReference>
<dbReference type="FunFam" id="3.40.50.300:FF:000113">
    <property type="entry name" value="Preprotein translocase subunit SecA"/>
    <property type="match status" value="1"/>
</dbReference>
<dbReference type="FunFam" id="3.90.1440.10:FF:000001">
    <property type="entry name" value="Preprotein translocase subunit SecA"/>
    <property type="match status" value="1"/>
</dbReference>
<dbReference type="Gene3D" id="1.10.3060.10">
    <property type="entry name" value="Helical scaffold and wing domains of SecA"/>
    <property type="match status" value="1"/>
</dbReference>
<dbReference type="Gene3D" id="3.40.50.300">
    <property type="entry name" value="P-loop containing nucleotide triphosphate hydrolases"/>
    <property type="match status" value="2"/>
</dbReference>
<dbReference type="Gene3D" id="3.90.1440.10">
    <property type="entry name" value="SecA, preprotein cross-linking domain"/>
    <property type="match status" value="1"/>
</dbReference>
<dbReference type="HAMAP" id="MF_01382">
    <property type="entry name" value="SecA"/>
    <property type="match status" value="1"/>
</dbReference>
<dbReference type="InterPro" id="IPR014001">
    <property type="entry name" value="Helicase_ATP-bd"/>
</dbReference>
<dbReference type="InterPro" id="IPR001650">
    <property type="entry name" value="Helicase_C-like"/>
</dbReference>
<dbReference type="InterPro" id="IPR027417">
    <property type="entry name" value="P-loop_NTPase"/>
</dbReference>
<dbReference type="InterPro" id="IPR004027">
    <property type="entry name" value="SEC_C_motif"/>
</dbReference>
<dbReference type="InterPro" id="IPR000185">
    <property type="entry name" value="SecA"/>
</dbReference>
<dbReference type="InterPro" id="IPR020937">
    <property type="entry name" value="SecA_CS"/>
</dbReference>
<dbReference type="InterPro" id="IPR011115">
    <property type="entry name" value="SecA_DEAD"/>
</dbReference>
<dbReference type="InterPro" id="IPR014018">
    <property type="entry name" value="SecA_motor_DEAD"/>
</dbReference>
<dbReference type="InterPro" id="IPR011130">
    <property type="entry name" value="SecA_preprotein_X-link_dom"/>
</dbReference>
<dbReference type="InterPro" id="IPR044722">
    <property type="entry name" value="SecA_SF2_C"/>
</dbReference>
<dbReference type="InterPro" id="IPR011116">
    <property type="entry name" value="SecA_Wing/Scaffold"/>
</dbReference>
<dbReference type="InterPro" id="IPR036266">
    <property type="entry name" value="SecA_Wing/Scaffold_sf"/>
</dbReference>
<dbReference type="InterPro" id="IPR036670">
    <property type="entry name" value="SecA_X-link_sf"/>
</dbReference>
<dbReference type="NCBIfam" id="NF009538">
    <property type="entry name" value="PRK12904.1"/>
    <property type="match status" value="1"/>
</dbReference>
<dbReference type="NCBIfam" id="TIGR00963">
    <property type="entry name" value="secA"/>
    <property type="match status" value="1"/>
</dbReference>
<dbReference type="PANTHER" id="PTHR30612:SF0">
    <property type="entry name" value="CHLOROPLAST PROTEIN-TRANSPORTING ATPASE"/>
    <property type="match status" value="1"/>
</dbReference>
<dbReference type="PANTHER" id="PTHR30612">
    <property type="entry name" value="SECA INNER MEMBRANE COMPONENT OF SEC PROTEIN SECRETION SYSTEM"/>
    <property type="match status" value="1"/>
</dbReference>
<dbReference type="Pfam" id="PF21090">
    <property type="entry name" value="P-loop_SecA"/>
    <property type="match status" value="1"/>
</dbReference>
<dbReference type="Pfam" id="PF02810">
    <property type="entry name" value="SEC-C"/>
    <property type="match status" value="1"/>
</dbReference>
<dbReference type="Pfam" id="PF07517">
    <property type="entry name" value="SecA_DEAD"/>
    <property type="match status" value="1"/>
</dbReference>
<dbReference type="Pfam" id="PF01043">
    <property type="entry name" value="SecA_PP_bind"/>
    <property type="match status" value="1"/>
</dbReference>
<dbReference type="Pfam" id="PF07516">
    <property type="entry name" value="SecA_SW"/>
    <property type="match status" value="1"/>
</dbReference>
<dbReference type="PRINTS" id="PR00906">
    <property type="entry name" value="SECA"/>
</dbReference>
<dbReference type="SMART" id="SM00957">
    <property type="entry name" value="SecA_DEAD"/>
    <property type="match status" value="1"/>
</dbReference>
<dbReference type="SMART" id="SM00958">
    <property type="entry name" value="SecA_PP_bind"/>
    <property type="match status" value="1"/>
</dbReference>
<dbReference type="SUPFAM" id="SSF81886">
    <property type="entry name" value="Helical scaffold and wing domains of SecA"/>
    <property type="match status" value="1"/>
</dbReference>
<dbReference type="SUPFAM" id="SSF52540">
    <property type="entry name" value="P-loop containing nucleoside triphosphate hydrolases"/>
    <property type="match status" value="2"/>
</dbReference>
<dbReference type="SUPFAM" id="SSF81767">
    <property type="entry name" value="Pre-protein crosslinking domain of SecA"/>
    <property type="match status" value="1"/>
</dbReference>
<dbReference type="PROSITE" id="PS01312">
    <property type="entry name" value="SECA"/>
    <property type="match status" value="1"/>
</dbReference>
<dbReference type="PROSITE" id="PS51196">
    <property type="entry name" value="SECA_MOTOR_DEAD"/>
    <property type="match status" value="1"/>
</dbReference>
<evidence type="ECO:0000255" key="1">
    <source>
        <dbReference type="HAMAP-Rule" id="MF_01382"/>
    </source>
</evidence>
<evidence type="ECO:0000256" key="2">
    <source>
        <dbReference type="SAM" id="MobiDB-lite"/>
    </source>
</evidence>
<proteinExistence type="inferred from homology"/>
<name>SECA_ECOSE</name>
<feature type="chain" id="PRO_1000145011" description="Protein translocase subunit SecA">
    <location>
        <begin position="1"/>
        <end position="901"/>
    </location>
</feature>
<feature type="region of interest" description="Disordered" evidence="2">
    <location>
        <begin position="859"/>
        <end position="901"/>
    </location>
</feature>
<feature type="compositionally biased region" description="Basic residues" evidence="2">
    <location>
        <begin position="891"/>
        <end position="901"/>
    </location>
</feature>
<feature type="binding site" evidence="1">
    <location>
        <position position="87"/>
    </location>
    <ligand>
        <name>ATP</name>
        <dbReference type="ChEBI" id="CHEBI:30616"/>
    </ligand>
</feature>
<feature type="binding site" evidence="1">
    <location>
        <begin position="105"/>
        <end position="109"/>
    </location>
    <ligand>
        <name>ATP</name>
        <dbReference type="ChEBI" id="CHEBI:30616"/>
    </ligand>
</feature>
<feature type="binding site" evidence="1">
    <location>
        <position position="512"/>
    </location>
    <ligand>
        <name>ATP</name>
        <dbReference type="ChEBI" id="CHEBI:30616"/>
    </ligand>
</feature>
<feature type="binding site" evidence="1">
    <location>
        <position position="885"/>
    </location>
    <ligand>
        <name>Zn(2+)</name>
        <dbReference type="ChEBI" id="CHEBI:29105"/>
    </ligand>
</feature>
<feature type="binding site" evidence="1">
    <location>
        <position position="887"/>
    </location>
    <ligand>
        <name>Zn(2+)</name>
        <dbReference type="ChEBI" id="CHEBI:29105"/>
    </ligand>
</feature>
<feature type="binding site" evidence="1">
    <location>
        <position position="896"/>
    </location>
    <ligand>
        <name>Zn(2+)</name>
        <dbReference type="ChEBI" id="CHEBI:29105"/>
    </ligand>
</feature>
<feature type="binding site" evidence="1">
    <location>
        <position position="897"/>
    </location>
    <ligand>
        <name>Zn(2+)</name>
        <dbReference type="ChEBI" id="CHEBI:29105"/>
    </ligand>
</feature>
<comment type="function">
    <text evidence="1">Part of the Sec protein translocase complex. Interacts with the SecYEG preprotein conducting channel. Has a central role in coupling the hydrolysis of ATP to the transfer of proteins into and across the cell membrane, serving both as a receptor for the preprotein-SecB complex and as an ATP-driven molecular motor driving the stepwise translocation of polypeptide chains across the membrane.</text>
</comment>
<comment type="catalytic activity">
    <reaction evidence="1">
        <text>ATP + H2O + cellular proteinSide 1 = ADP + phosphate + cellular proteinSide 2.</text>
        <dbReference type="EC" id="7.4.2.8"/>
    </reaction>
</comment>
<comment type="cofactor">
    <cofactor evidence="1">
        <name>Zn(2+)</name>
        <dbReference type="ChEBI" id="CHEBI:29105"/>
    </cofactor>
    <text evidence="1">May bind 1 zinc ion per subunit.</text>
</comment>
<comment type="subunit">
    <text evidence="1">Monomer and homodimer. Part of the essential Sec protein translocation apparatus which comprises SecA, SecYEG and auxiliary proteins SecDF-YajC and YidC.</text>
</comment>
<comment type="subcellular location">
    <subcellularLocation>
        <location evidence="1">Cell inner membrane</location>
        <topology evidence="1">Peripheral membrane protein</topology>
        <orientation evidence="1">Cytoplasmic side</orientation>
    </subcellularLocation>
    <subcellularLocation>
        <location evidence="1">Cytoplasm</location>
    </subcellularLocation>
    <text evidence="1">Distribution is 50-50.</text>
</comment>
<comment type="induction">
    <text evidence="1">Repressed under conditions of excess protein secretion capacity and derepressed when protein secretion becomes limiting. This is regulated by SecM.</text>
</comment>
<comment type="similarity">
    <text evidence="1">Belongs to the SecA family.</text>
</comment>
<accession>B6HZ76</accession>
<sequence length="901" mass="102023">MLIKLLTKVFGSRNDRTLRRMRKVVNIINAMEPEMEKLSDEELKGKTAEFRARLEKGEVLENLIPEAFAVVREASKRVFGMRHFDVQLLGGMVLNERCIAEMRTGEGKTLTATLPAYLNALTGKGVHVVTVNDYLAQRDAENNRPLFEFLGLTVGINLPGMPAPAKREAYAADITYGTNNEYGFDYLRDNMAFSPEERVQRKLHYALVDEVDSILIDEARTPLIISGPAEDSSEMYKRVNKIIPHLIRQEKEDSETFQGEGHFSVDEKSRQVNLTERGLVLIEELLVKEGIMDEGESLYSPANIMLMHHVTAALRAHALFTRDVDYIVKDGEVIIVDEHTGRTMQGRRWSDGLHQAVEAKEGVQIQNENQTLASITFQNYFRLYEKLAGMTGTADTEAFEFSSIYKLDTVVVPTNRPMIRKDLPDLVYMTEAEKIQAIIEDIKERTAKGQPVLVGTISIEKSELVSNELTKAGIKHNVLNAKFHANEAAIVAQAGYPAAVTIATNMAGRGTDIVLGGSWQAEVAALENPTAEQIEKIKADWQVRHDAVLEAGGLHIIGTERHESRRIDNQLRGRSGRQGDAGSSRFYLSMEDALMRIFASDRVSGMMRKLGMKPGEAIEHPWVTKAIANAQRKVESRNFDIRKQLLEYDDVANDQRRAIYSQRNELLDVSDVSETINSIREDVFKATIDAYIPPQSLEEMWDIPGLQERLKNDFDLDLPIAEWLDKEPELHEETLRERILAQSIEVYQRKEEVVGAEMMRHFEKGVMLQTLDSLWKEHLAAMDYLRQGIHLRGYAQKDPKQEYKRESFSMFAAMLESLKYEVISTLSKVQVRMPEEVEELEQQRRMEAERLAQMQQLSHQDDDSAAAAALAAQTGERKVGRNDPCPCGSGKKYKQCHGRLQ</sequence>